<comment type="function">
    <text evidence="1">This protein is one of the early assembly proteins of the 50S ribosomal subunit, although it is not seen to bind rRNA by itself. It is important during the early stages of 50S assembly.</text>
</comment>
<comment type="subunit">
    <text evidence="1">Part of the 50S ribosomal subunit.</text>
</comment>
<comment type="similarity">
    <text evidence="1">Belongs to the universal ribosomal protein uL13 family.</text>
</comment>
<proteinExistence type="inferred from homology"/>
<keyword id="KW-1185">Reference proteome</keyword>
<keyword id="KW-0687">Ribonucleoprotein</keyword>
<keyword id="KW-0689">Ribosomal protein</keyword>
<reference key="1">
    <citation type="journal article" date="2011" name="Stand. Genomic Sci.">
        <title>Complete genome sequence of 'Thioalkalivibrio sulfidophilus' HL-EbGr7.</title>
        <authorList>
            <person name="Muyzer G."/>
            <person name="Sorokin D.Y."/>
            <person name="Mavromatis K."/>
            <person name="Lapidus A."/>
            <person name="Clum A."/>
            <person name="Ivanova N."/>
            <person name="Pati A."/>
            <person name="d'Haeseleer P."/>
            <person name="Woyke T."/>
            <person name="Kyrpides N.C."/>
        </authorList>
    </citation>
    <scope>NUCLEOTIDE SEQUENCE [LARGE SCALE GENOMIC DNA]</scope>
    <source>
        <strain>HL-EbGR7</strain>
    </source>
</reference>
<feature type="chain" id="PRO_1000166885" description="Large ribosomal subunit protein uL13">
    <location>
        <begin position="1"/>
        <end position="142"/>
    </location>
</feature>
<protein>
    <recommendedName>
        <fullName evidence="1">Large ribosomal subunit protein uL13</fullName>
    </recommendedName>
    <alternativeName>
        <fullName evidence="2">50S ribosomal protein L13</fullName>
    </alternativeName>
</protein>
<dbReference type="EMBL" id="CP001339">
    <property type="protein sequence ID" value="ACL73862.1"/>
    <property type="molecule type" value="Genomic_DNA"/>
</dbReference>
<dbReference type="RefSeq" id="WP_012639337.1">
    <property type="nucleotide sequence ID" value="NC_011901.1"/>
</dbReference>
<dbReference type="SMR" id="B8GNH1"/>
<dbReference type="STRING" id="396588.Tgr7_2789"/>
<dbReference type="KEGG" id="tgr:Tgr7_2789"/>
<dbReference type="eggNOG" id="COG0102">
    <property type="taxonomic scope" value="Bacteria"/>
</dbReference>
<dbReference type="HOGENOM" id="CLU_082184_2_2_6"/>
<dbReference type="OrthoDB" id="9801330at2"/>
<dbReference type="Proteomes" id="UP000002383">
    <property type="component" value="Chromosome"/>
</dbReference>
<dbReference type="GO" id="GO:0022625">
    <property type="term" value="C:cytosolic large ribosomal subunit"/>
    <property type="evidence" value="ECO:0007669"/>
    <property type="project" value="TreeGrafter"/>
</dbReference>
<dbReference type="GO" id="GO:0003729">
    <property type="term" value="F:mRNA binding"/>
    <property type="evidence" value="ECO:0007669"/>
    <property type="project" value="TreeGrafter"/>
</dbReference>
<dbReference type="GO" id="GO:0003735">
    <property type="term" value="F:structural constituent of ribosome"/>
    <property type="evidence" value="ECO:0007669"/>
    <property type="project" value="InterPro"/>
</dbReference>
<dbReference type="GO" id="GO:0017148">
    <property type="term" value="P:negative regulation of translation"/>
    <property type="evidence" value="ECO:0007669"/>
    <property type="project" value="TreeGrafter"/>
</dbReference>
<dbReference type="GO" id="GO:0006412">
    <property type="term" value="P:translation"/>
    <property type="evidence" value="ECO:0007669"/>
    <property type="project" value="UniProtKB-UniRule"/>
</dbReference>
<dbReference type="CDD" id="cd00392">
    <property type="entry name" value="Ribosomal_L13"/>
    <property type="match status" value="1"/>
</dbReference>
<dbReference type="FunFam" id="3.90.1180.10:FF:000001">
    <property type="entry name" value="50S ribosomal protein L13"/>
    <property type="match status" value="1"/>
</dbReference>
<dbReference type="Gene3D" id="3.90.1180.10">
    <property type="entry name" value="Ribosomal protein L13"/>
    <property type="match status" value="1"/>
</dbReference>
<dbReference type="HAMAP" id="MF_01366">
    <property type="entry name" value="Ribosomal_uL13"/>
    <property type="match status" value="1"/>
</dbReference>
<dbReference type="InterPro" id="IPR005822">
    <property type="entry name" value="Ribosomal_uL13"/>
</dbReference>
<dbReference type="InterPro" id="IPR005823">
    <property type="entry name" value="Ribosomal_uL13_bac-type"/>
</dbReference>
<dbReference type="InterPro" id="IPR023563">
    <property type="entry name" value="Ribosomal_uL13_CS"/>
</dbReference>
<dbReference type="InterPro" id="IPR036899">
    <property type="entry name" value="Ribosomal_uL13_sf"/>
</dbReference>
<dbReference type="NCBIfam" id="TIGR01066">
    <property type="entry name" value="rplM_bact"/>
    <property type="match status" value="1"/>
</dbReference>
<dbReference type="PANTHER" id="PTHR11545:SF2">
    <property type="entry name" value="LARGE RIBOSOMAL SUBUNIT PROTEIN UL13M"/>
    <property type="match status" value="1"/>
</dbReference>
<dbReference type="PANTHER" id="PTHR11545">
    <property type="entry name" value="RIBOSOMAL PROTEIN L13"/>
    <property type="match status" value="1"/>
</dbReference>
<dbReference type="Pfam" id="PF00572">
    <property type="entry name" value="Ribosomal_L13"/>
    <property type="match status" value="1"/>
</dbReference>
<dbReference type="PIRSF" id="PIRSF002181">
    <property type="entry name" value="Ribosomal_L13"/>
    <property type="match status" value="1"/>
</dbReference>
<dbReference type="SUPFAM" id="SSF52161">
    <property type="entry name" value="Ribosomal protein L13"/>
    <property type="match status" value="1"/>
</dbReference>
<dbReference type="PROSITE" id="PS00783">
    <property type="entry name" value="RIBOSOMAL_L13"/>
    <property type="match status" value="1"/>
</dbReference>
<gene>
    <name evidence="1" type="primary">rplM</name>
    <name type="ordered locus">Tgr7_2789</name>
</gene>
<accession>B8GNH1</accession>
<evidence type="ECO:0000255" key="1">
    <source>
        <dbReference type="HAMAP-Rule" id="MF_01366"/>
    </source>
</evidence>
<evidence type="ECO:0000305" key="2"/>
<organism>
    <name type="scientific">Thioalkalivibrio sulfidiphilus (strain HL-EbGR7)</name>
    <dbReference type="NCBI Taxonomy" id="396588"/>
    <lineage>
        <taxon>Bacteria</taxon>
        <taxon>Pseudomonadati</taxon>
        <taxon>Pseudomonadota</taxon>
        <taxon>Gammaproteobacteria</taxon>
        <taxon>Chromatiales</taxon>
        <taxon>Ectothiorhodospiraceae</taxon>
        <taxon>Thioalkalivibrio</taxon>
    </lineage>
</organism>
<name>RL13_THISH</name>
<sequence length="142" mass="16197">MKTFSAKPAEVKRDWYLVDASGKTLGRLASEVARRLRGKHKPEYTPHVDTGDYIVIINADKVRVSGKKAQDKMYYHHTGYIGHMKSMNFNQLMERAPERAIEFAVKGMLPKNPLGRAMFKKLKVYAGTEHKHTAQQPQALEL</sequence>